<name>INT9_CHICK</name>
<sequence>MKLYCLSGHPTLPCNVLKFKSTTIMLDCGLDMTSTLNFLPLPLVQSPRLSKLPGLVLKDGSTFLDKELKECSGHVFVDSVPEFCLPETELLDLSTVDVILISNYHCMMALPYITEYTGFTGTVYATEPTVQIGRLLMEELVNSIERVPKAQSASTWKNKEVQRLLPAPLKDAVEVSMWRKCYTMPEVNAALSKIQLVGYSQKIELFGAVQVTPLSSGYALGSSNWIIQSHYEKVSYVSGSSLLTTHPQPMDQASLKNSDVLILTGLTQIPTANPDGMVGEFCSNLAMTVRNGGNVLVPCYPSGVIYDLLECLYQYIDSAGLSNVPFYFISPVANSSLEFSQIFAEWLCHNKQTKVYLPEPPFPHAELIQTNKLKHYPSIHGDFSNDFKQPCVIFTGHPSLRFGDVVHFMELWGKSSLNTVIFTEPDFSYLDALAPYQPLAMKCVYCPIDTRLNFIQVSKLLKEVQPLHVVCPEQYTQPPPSQSHRTDLMIDCQPPPMSYRRAEVLTLPYKRRYEKIEIMPELADSLVPLEIKPGISLATVSAMLHTKDNKHVLQLPPKPPQPPTSKKRKRVSDDVPECKPLKPLLSGSIPVDQFVQTLEKHGFSDVKVEDTAKGHIVLLQEAETLIQIEEDSTHIICDNDEPLRVKLRDLVLKFLQKF</sequence>
<keyword id="KW-0963">Cytoplasm</keyword>
<keyword id="KW-0539">Nucleus</keyword>
<keyword id="KW-1185">Reference proteome</keyword>
<reference key="1">
    <citation type="journal article" date="2005" name="Genome Biol.">
        <title>Full-length cDNAs from chicken bursal lymphocytes to facilitate gene function analysis.</title>
        <authorList>
            <person name="Caldwell R.B."/>
            <person name="Kierzek A.M."/>
            <person name="Arakawa H."/>
            <person name="Bezzubov Y."/>
            <person name="Zaim J."/>
            <person name="Fiedler P."/>
            <person name="Kutter S."/>
            <person name="Blagodatski A."/>
            <person name="Kostovska D."/>
            <person name="Koter M."/>
            <person name="Plachy J."/>
            <person name="Carninci P."/>
            <person name="Hayashizaki Y."/>
            <person name="Buerstedde J.-M."/>
        </authorList>
    </citation>
    <scope>NUCLEOTIDE SEQUENCE [LARGE SCALE MRNA]</scope>
    <source>
        <strain>CB</strain>
        <tissue>Bursa of Fabricius</tissue>
    </source>
</reference>
<comment type="function">
    <text evidence="1">Component of the integrator complex, a multiprotein complex that terminates RNA polymerase II (Pol II) transcription in the promoter-proximal region of genes. The integrator complex provides a quality checkpoint during transcription elongation by driving premature transcription termination of transcripts that are unfavorably configured for transcriptional elongation: the complex terminates transcription by (1) catalyzing dephosphorylation of the C-terminal domain (CTD) of Pol II subunit POLR2A/RPB1 and SUPT5H/SPT5, (2) degrading the exiting nascent RNA transcript via endonuclease activity and (3) promoting the release of Pol II from bound DNA. The integrator complex is also involved in terminating the synthesis of non-coding Pol II transcripts, such as enhancer RNAs (eRNAs), small nuclear RNAs (snRNAs), telomerase RNAs and long non-coding RNAs (lncRNAs).</text>
</comment>
<comment type="subunit">
    <text evidence="1">Component of the Integrator complex, composed of core subunits INTS1, INTS2, INTS3, INTS4, INTS5, INTS6, INTS7, INTS8, INTS9/RC74, INTS10, INTS11/CPSF3L, INTS12, INTS13, INTS14 and INTS15. The core complex associates with protein phosphatase 2A subunits PPP2CA and PPP2R1A, to form the Integrator-PP2A (INTAC) complex. INTS9 is part of the RNA endonuclease subcomplex, composed of INTS4, INTS9, INTS11 and inositol hexakisphosphate (InsP6).</text>
</comment>
<comment type="subcellular location">
    <subcellularLocation>
        <location evidence="1">Nucleus</location>
    </subcellularLocation>
    <subcellularLocation>
        <location evidence="1">Cytoplasm</location>
    </subcellularLocation>
</comment>
<comment type="miscellaneous">
    <text>Although strongly related to RNA-specific endonuclease proteins, it lacks the HXHXDH motif that binds zinc and participates in the catalytic center. Its function as endonuclease is therefore unsure.</text>
</comment>
<comment type="similarity">
    <text evidence="3">Belongs to the metallo-beta-lactamase superfamily. RNA-metabolizing metallo-beta-lactamase-like family. INTS9 subfamily.</text>
</comment>
<organism>
    <name type="scientific">Gallus gallus</name>
    <name type="common">Chicken</name>
    <dbReference type="NCBI Taxonomy" id="9031"/>
    <lineage>
        <taxon>Eukaryota</taxon>
        <taxon>Metazoa</taxon>
        <taxon>Chordata</taxon>
        <taxon>Craniata</taxon>
        <taxon>Vertebrata</taxon>
        <taxon>Euteleostomi</taxon>
        <taxon>Archelosauria</taxon>
        <taxon>Archosauria</taxon>
        <taxon>Dinosauria</taxon>
        <taxon>Saurischia</taxon>
        <taxon>Theropoda</taxon>
        <taxon>Coelurosauria</taxon>
        <taxon>Aves</taxon>
        <taxon>Neognathae</taxon>
        <taxon>Galloanserae</taxon>
        <taxon>Galliformes</taxon>
        <taxon>Phasianidae</taxon>
        <taxon>Phasianinae</taxon>
        <taxon>Gallus</taxon>
    </lineage>
</organism>
<evidence type="ECO:0000250" key="1">
    <source>
        <dbReference type="UniProtKB" id="Q9NV88"/>
    </source>
</evidence>
<evidence type="ECO:0000256" key="2">
    <source>
        <dbReference type="SAM" id="MobiDB-lite"/>
    </source>
</evidence>
<evidence type="ECO:0000305" key="3"/>
<gene>
    <name type="primary">INTS9</name>
    <name type="ORF">RCJMB04_10e20</name>
</gene>
<feature type="chain" id="PRO_0000259560" description="Integrator complex subunit 9">
    <location>
        <begin position="1"/>
        <end position="658"/>
    </location>
</feature>
<feature type="region of interest" description="Disordered" evidence="2">
    <location>
        <begin position="550"/>
        <end position="574"/>
    </location>
</feature>
<feature type="short sequence motif" description="Nuclear localization signal" evidence="1">
    <location>
        <begin position="566"/>
        <end position="570"/>
    </location>
</feature>
<proteinExistence type="evidence at transcript level"/>
<protein>
    <recommendedName>
        <fullName>Integrator complex subunit 9</fullName>
        <shortName>Int9</shortName>
    </recommendedName>
</protein>
<dbReference type="EMBL" id="AJ720082">
    <property type="protein sequence ID" value="CAG31741.1"/>
    <property type="molecule type" value="mRNA"/>
</dbReference>
<dbReference type="RefSeq" id="NP_001026271.1">
    <property type="nucleotide sequence ID" value="NM_001031100.2"/>
</dbReference>
<dbReference type="SMR" id="Q5ZKK2"/>
<dbReference type="FunCoup" id="Q5ZKK2">
    <property type="interactions" value="2754"/>
</dbReference>
<dbReference type="STRING" id="9031.ENSGALP00000026797"/>
<dbReference type="PaxDb" id="9031-ENSGALP00000042736"/>
<dbReference type="GeneID" id="422023"/>
<dbReference type="KEGG" id="gga:422023"/>
<dbReference type="CTD" id="55756"/>
<dbReference type="VEuPathDB" id="HostDB:geneid_422023"/>
<dbReference type="eggNOG" id="KOG1138">
    <property type="taxonomic scope" value="Eukaryota"/>
</dbReference>
<dbReference type="HOGENOM" id="CLU_023159_1_0_1"/>
<dbReference type="InParanoid" id="Q5ZKK2"/>
<dbReference type="OMA" id="AMKAVHC"/>
<dbReference type="OrthoDB" id="5600060at2759"/>
<dbReference type="PhylomeDB" id="Q5ZKK2"/>
<dbReference type="TreeFam" id="TF314100"/>
<dbReference type="Reactome" id="R-GGA-6807505">
    <property type="pathway name" value="RNA polymerase II transcribes snRNA genes"/>
</dbReference>
<dbReference type="PRO" id="PR:Q5ZKK2"/>
<dbReference type="Proteomes" id="UP000000539">
    <property type="component" value="Chromosome 3"/>
</dbReference>
<dbReference type="Bgee" id="ENSGALG00000016631">
    <property type="expression patterns" value="Expressed in testis and 13 other cell types or tissues"/>
</dbReference>
<dbReference type="GO" id="GO:0005737">
    <property type="term" value="C:cytoplasm"/>
    <property type="evidence" value="ECO:0000250"/>
    <property type="project" value="UniProtKB"/>
</dbReference>
<dbReference type="GO" id="GO:0160232">
    <property type="term" value="C:INTAC complex"/>
    <property type="evidence" value="ECO:0000250"/>
    <property type="project" value="UniProtKB"/>
</dbReference>
<dbReference type="GO" id="GO:0032039">
    <property type="term" value="C:integrator complex"/>
    <property type="evidence" value="ECO:0000250"/>
    <property type="project" value="UniProtKB"/>
</dbReference>
<dbReference type="GO" id="GO:0005634">
    <property type="term" value="C:nucleus"/>
    <property type="evidence" value="ECO:0000250"/>
    <property type="project" value="UniProtKB"/>
</dbReference>
<dbReference type="GO" id="GO:0160240">
    <property type="term" value="P:RNA polymerase II transcription initiation surveillance"/>
    <property type="evidence" value="ECO:0000250"/>
    <property type="project" value="UniProtKB"/>
</dbReference>
<dbReference type="GO" id="GO:0034472">
    <property type="term" value="P:snRNA 3'-end processing"/>
    <property type="evidence" value="ECO:0000250"/>
    <property type="project" value="UniProtKB"/>
</dbReference>
<dbReference type="CDD" id="cd16294">
    <property type="entry name" value="Int9-like_MBL-fold"/>
    <property type="match status" value="1"/>
</dbReference>
<dbReference type="FunFam" id="3.40.50.10890:FF:000003">
    <property type="entry name" value="Integrator complex subunit 9"/>
    <property type="match status" value="1"/>
</dbReference>
<dbReference type="Gene3D" id="3.40.50.10890">
    <property type="match status" value="1"/>
</dbReference>
<dbReference type="Gene3D" id="3.60.15.10">
    <property type="entry name" value="Ribonuclease Z/Hydroxyacylglutathione hydrolase-like"/>
    <property type="match status" value="1"/>
</dbReference>
<dbReference type="InterPro" id="IPR022712">
    <property type="entry name" value="Beta_Casp"/>
</dbReference>
<dbReference type="InterPro" id="IPR027074">
    <property type="entry name" value="Integrator_9su"/>
</dbReference>
<dbReference type="InterPro" id="IPR048660">
    <property type="entry name" value="IntS9-like_C"/>
</dbReference>
<dbReference type="InterPro" id="IPR001279">
    <property type="entry name" value="Metallo-B-lactamas"/>
</dbReference>
<dbReference type="InterPro" id="IPR036866">
    <property type="entry name" value="RibonucZ/Hydroxyglut_hydro"/>
</dbReference>
<dbReference type="PANTHER" id="PTHR46094">
    <property type="entry name" value="INTEGRATOR COMPLEX SUBUNIT 9"/>
    <property type="match status" value="1"/>
</dbReference>
<dbReference type="PANTHER" id="PTHR46094:SF1">
    <property type="entry name" value="INTEGRATOR COMPLEX SUBUNIT 9"/>
    <property type="match status" value="1"/>
</dbReference>
<dbReference type="Pfam" id="PF10996">
    <property type="entry name" value="Beta-Casp"/>
    <property type="match status" value="1"/>
</dbReference>
<dbReference type="Pfam" id="PF21382">
    <property type="entry name" value="IntS9_C"/>
    <property type="match status" value="1"/>
</dbReference>
<dbReference type="Pfam" id="PF16661">
    <property type="entry name" value="Lactamase_B_6"/>
    <property type="match status" value="1"/>
</dbReference>
<dbReference type="SMART" id="SM01027">
    <property type="entry name" value="Beta-Casp"/>
    <property type="match status" value="1"/>
</dbReference>
<dbReference type="SUPFAM" id="SSF56281">
    <property type="entry name" value="Metallo-hydrolase/oxidoreductase"/>
    <property type="match status" value="1"/>
</dbReference>
<accession>Q5ZKK2</accession>